<protein>
    <recommendedName>
        <fullName evidence="1">Phospho-N-acetylmuramoyl-pentapeptide-transferase</fullName>
        <ecNumber evidence="1">2.7.8.13</ecNumber>
    </recommendedName>
    <alternativeName>
        <fullName evidence="1">UDP-MurNAc-pentapeptide phosphotransferase</fullName>
    </alternativeName>
</protein>
<proteinExistence type="inferred from homology"/>
<comment type="function">
    <text evidence="1">Catalyzes the initial step of the lipid cycle reactions in the biosynthesis of the cell wall peptidoglycan: transfers peptidoglycan precursor phospho-MurNAc-pentapeptide from UDP-MurNAc-pentapeptide onto the lipid carrier undecaprenyl phosphate, yielding undecaprenyl-pyrophosphoryl-MurNAc-pentapeptide, known as lipid I.</text>
</comment>
<comment type="catalytic activity">
    <reaction evidence="1">
        <text>UDP-N-acetyl-alpha-D-muramoyl-L-alanyl-gamma-D-glutamyl-meso-2,6-diaminopimeloyl-D-alanyl-D-alanine + di-trans,octa-cis-undecaprenyl phosphate = di-trans,octa-cis-undecaprenyl diphospho-N-acetyl-alpha-D-muramoyl-L-alanyl-D-glutamyl-meso-2,6-diaminopimeloyl-D-alanyl-D-alanine + UMP</text>
        <dbReference type="Rhea" id="RHEA:28386"/>
        <dbReference type="ChEBI" id="CHEBI:57865"/>
        <dbReference type="ChEBI" id="CHEBI:60392"/>
        <dbReference type="ChEBI" id="CHEBI:61386"/>
        <dbReference type="ChEBI" id="CHEBI:61387"/>
        <dbReference type="EC" id="2.7.8.13"/>
    </reaction>
</comment>
<comment type="cofactor">
    <cofactor evidence="1">
        <name>Mg(2+)</name>
        <dbReference type="ChEBI" id="CHEBI:18420"/>
    </cofactor>
</comment>
<comment type="pathway">
    <text evidence="1">Cell wall biogenesis; peptidoglycan biosynthesis.</text>
</comment>
<comment type="subcellular location">
    <subcellularLocation>
        <location evidence="1">Cell inner membrane</location>
        <topology evidence="1">Multi-pass membrane protein</topology>
    </subcellularLocation>
</comment>
<comment type="similarity">
    <text evidence="1">Belongs to the glycosyltransferase 4 family. MraY subfamily.</text>
</comment>
<name>MRAY_AMOA5</name>
<evidence type="ECO:0000255" key="1">
    <source>
        <dbReference type="HAMAP-Rule" id="MF_00038"/>
    </source>
</evidence>
<organism>
    <name type="scientific">Amoebophilus asiaticus (strain 5a2)</name>
    <dbReference type="NCBI Taxonomy" id="452471"/>
    <lineage>
        <taxon>Bacteria</taxon>
        <taxon>Pseudomonadati</taxon>
        <taxon>Bacteroidota</taxon>
        <taxon>Cytophagia</taxon>
        <taxon>Cytophagales</taxon>
        <taxon>Amoebophilaceae</taxon>
        <taxon>Candidatus Amoebophilus</taxon>
    </lineage>
</organism>
<accession>B3ER47</accession>
<gene>
    <name evidence="1" type="primary">mraY</name>
    <name type="ordered locus">Aasi_0256</name>
</gene>
<feature type="chain" id="PRO_1000090588" description="Phospho-N-acetylmuramoyl-pentapeptide-transferase">
    <location>
        <begin position="1"/>
        <end position="404"/>
    </location>
</feature>
<feature type="transmembrane region" description="Helical" evidence="1">
    <location>
        <begin position="30"/>
        <end position="50"/>
    </location>
</feature>
<feature type="transmembrane region" description="Helical" evidence="1">
    <location>
        <begin position="73"/>
        <end position="93"/>
    </location>
</feature>
<feature type="transmembrane region" description="Helical" evidence="1">
    <location>
        <begin position="100"/>
        <end position="120"/>
    </location>
</feature>
<feature type="transmembrane region" description="Helical" evidence="1">
    <location>
        <begin position="132"/>
        <end position="152"/>
    </location>
</feature>
<feature type="transmembrane region" description="Helical" evidence="1">
    <location>
        <begin position="209"/>
        <end position="229"/>
    </location>
</feature>
<feature type="transmembrane region" description="Helical" evidence="1">
    <location>
        <begin position="242"/>
        <end position="262"/>
    </location>
</feature>
<feature type="transmembrane region" description="Helical" evidence="1">
    <location>
        <begin position="274"/>
        <end position="294"/>
    </location>
</feature>
<feature type="transmembrane region" description="Helical" evidence="1">
    <location>
        <begin position="301"/>
        <end position="321"/>
    </location>
</feature>
<feature type="transmembrane region" description="Helical" evidence="1">
    <location>
        <begin position="326"/>
        <end position="346"/>
    </location>
</feature>
<feature type="transmembrane region" description="Helical" evidence="1">
    <location>
        <begin position="381"/>
        <end position="401"/>
    </location>
</feature>
<reference key="1">
    <citation type="journal article" date="2010" name="J. Bacteriol.">
        <title>The genome of the amoeba symbiont 'Candidatus Amoebophilus asiaticus' reveals common mechanisms for host cell interaction among amoeba-associated bacteria.</title>
        <authorList>
            <person name="Schmitz-Esser S."/>
            <person name="Tischler P."/>
            <person name="Arnold R."/>
            <person name="Montanaro J."/>
            <person name="Wagner M."/>
            <person name="Rattei T."/>
            <person name="Horn M."/>
        </authorList>
    </citation>
    <scope>NUCLEOTIDE SEQUENCE [LARGE SCALE GENOMIC DNA]</scope>
    <source>
        <strain>5a2</strain>
    </source>
</reference>
<sequence length="404" mass="45209">MLYYFFKYIDRFSHIPGIGVFKYISFRAASAAILSLCISIFLGKRLIIFFKTAQIKEGIRELDLAGQSEKAHIPTMGGIIIIAATVVPTLLFAKLKNVYIMLLLISIIWMGLIGFIDDYIKVFKRDKKGLAGKFKIVGQVALGVIVGITLIFRDDVVIREFGSNITVIENGQVTINDYKDVKTVKTTIPFLKNNELDYSKLIPWLDSKYMWIVYVLFMIFIIAAVSNGANLTDGLDGLTAGTSAIIGTTLAILAYVSGNVIFSRYLNIMYIPNLAELAIFCTAFVGACVGFLWYNTYPAQIFMGDTGSLAIGSVIAVLAIVIRKELMIPLLCGIFFIETLSVIIQVGYFKYTKYRYGIGKRMFKMAPLHHHFQKLGFHESKIVTRFWIVGIVLAILSLVTLKLR</sequence>
<dbReference type="EC" id="2.7.8.13" evidence="1"/>
<dbReference type="EMBL" id="CP001102">
    <property type="protein sequence ID" value="ACE05699.1"/>
    <property type="molecule type" value="Genomic_DNA"/>
</dbReference>
<dbReference type="RefSeq" id="WP_012472458.1">
    <property type="nucleotide sequence ID" value="NC_010830.1"/>
</dbReference>
<dbReference type="SMR" id="B3ER47"/>
<dbReference type="STRING" id="452471.Aasi_0256"/>
<dbReference type="KEGG" id="aas:Aasi_0256"/>
<dbReference type="eggNOG" id="COG0472">
    <property type="taxonomic scope" value="Bacteria"/>
</dbReference>
<dbReference type="HOGENOM" id="CLU_023982_0_0_10"/>
<dbReference type="OrthoDB" id="9805475at2"/>
<dbReference type="UniPathway" id="UPA00219"/>
<dbReference type="Proteomes" id="UP000001227">
    <property type="component" value="Chromosome"/>
</dbReference>
<dbReference type="GO" id="GO:0005886">
    <property type="term" value="C:plasma membrane"/>
    <property type="evidence" value="ECO:0007669"/>
    <property type="project" value="UniProtKB-SubCell"/>
</dbReference>
<dbReference type="GO" id="GO:0046872">
    <property type="term" value="F:metal ion binding"/>
    <property type="evidence" value="ECO:0007669"/>
    <property type="project" value="UniProtKB-KW"/>
</dbReference>
<dbReference type="GO" id="GO:0008963">
    <property type="term" value="F:phospho-N-acetylmuramoyl-pentapeptide-transferase activity"/>
    <property type="evidence" value="ECO:0007669"/>
    <property type="project" value="UniProtKB-UniRule"/>
</dbReference>
<dbReference type="GO" id="GO:0051992">
    <property type="term" value="F:UDP-N-acetylmuramoyl-L-alanyl-D-glutamyl-meso-2,6-diaminopimelyl-D-alanyl-D-alanine:undecaprenyl-phosphate transferase activity"/>
    <property type="evidence" value="ECO:0007669"/>
    <property type="project" value="RHEA"/>
</dbReference>
<dbReference type="GO" id="GO:0051301">
    <property type="term" value="P:cell division"/>
    <property type="evidence" value="ECO:0007669"/>
    <property type="project" value="UniProtKB-KW"/>
</dbReference>
<dbReference type="GO" id="GO:0071555">
    <property type="term" value="P:cell wall organization"/>
    <property type="evidence" value="ECO:0007669"/>
    <property type="project" value="UniProtKB-KW"/>
</dbReference>
<dbReference type="GO" id="GO:0009252">
    <property type="term" value="P:peptidoglycan biosynthetic process"/>
    <property type="evidence" value="ECO:0007669"/>
    <property type="project" value="UniProtKB-UniRule"/>
</dbReference>
<dbReference type="GO" id="GO:0008360">
    <property type="term" value="P:regulation of cell shape"/>
    <property type="evidence" value="ECO:0007669"/>
    <property type="project" value="UniProtKB-KW"/>
</dbReference>
<dbReference type="CDD" id="cd06852">
    <property type="entry name" value="GT_MraY"/>
    <property type="match status" value="1"/>
</dbReference>
<dbReference type="HAMAP" id="MF_00038">
    <property type="entry name" value="MraY"/>
    <property type="match status" value="1"/>
</dbReference>
<dbReference type="InterPro" id="IPR000715">
    <property type="entry name" value="Glycosyl_transferase_4"/>
</dbReference>
<dbReference type="InterPro" id="IPR003524">
    <property type="entry name" value="PNAcMuramoyl-5peptid_Trfase"/>
</dbReference>
<dbReference type="InterPro" id="IPR018480">
    <property type="entry name" value="PNAcMuramoyl-5peptid_Trfase_CS"/>
</dbReference>
<dbReference type="NCBIfam" id="TIGR00445">
    <property type="entry name" value="mraY"/>
    <property type="match status" value="1"/>
</dbReference>
<dbReference type="PANTHER" id="PTHR22926">
    <property type="entry name" value="PHOSPHO-N-ACETYLMURAMOYL-PENTAPEPTIDE-TRANSFERASE"/>
    <property type="match status" value="1"/>
</dbReference>
<dbReference type="PANTHER" id="PTHR22926:SF5">
    <property type="entry name" value="PHOSPHO-N-ACETYLMURAMOYL-PENTAPEPTIDE-TRANSFERASE HOMOLOG"/>
    <property type="match status" value="1"/>
</dbReference>
<dbReference type="Pfam" id="PF00953">
    <property type="entry name" value="Glycos_transf_4"/>
    <property type="match status" value="1"/>
</dbReference>
<dbReference type="PROSITE" id="PS01347">
    <property type="entry name" value="MRAY_1"/>
    <property type="match status" value="1"/>
</dbReference>
<dbReference type="PROSITE" id="PS01348">
    <property type="entry name" value="MRAY_2"/>
    <property type="match status" value="1"/>
</dbReference>
<keyword id="KW-0131">Cell cycle</keyword>
<keyword id="KW-0132">Cell division</keyword>
<keyword id="KW-0997">Cell inner membrane</keyword>
<keyword id="KW-1003">Cell membrane</keyword>
<keyword id="KW-0133">Cell shape</keyword>
<keyword id="KW-0961">Cell wall biogenesis/degradation</keyword>
<keyword id="KW-0460">Magnesium</keyword>
<keyword id="KW-0472">Membrane</keyword>
<keyword id="KW-0479">Metal-binding</keyword>
<keyword id="KW-0573">Peptidoglycan synthesis</keyword>
<keyword id="KW-1185">Reference proteome</keyword>
<keyword id="KW-0808">Transferase</keyword>
<keyword id="KW-0812">Transmembrane</keyword>
<keyword id="KW-1133">Transmembrane helix</keyword>